<sequence length="133" mass="14197">MNAPVWWQQLLLAMTGGALGSGLRFAIGASLIQRFGNVFPWGTLTVNLLGSFVAGVLLVWLDARGPSSWPLRALLIVGVIGGLTTFSSLMMECLVFARTDRSTMIGIYLAVTLLAGLALVFAGARTGQWLVTR</sequence>
<reference key="1">
    <citation type="journal article" date="2002" name="Nature">
        <title>Comparison of the genomes of two Xanthomonas pathogens with differing host specificities.</title>
        <authorList>
            <person name="da Silva A.C.R."/>
            <person name="Ferro J.A."/>
            <person name="Reinach F.C."/>
            <person name="Farah C.S."/>
            <person name="Furlan L.R."/>
            <person name="Quaggio R.B."/>
            <person name="Monteiro-Vitorello C.B."/>
            <person name="Van Sluys M.A."/>
            <person name="Almeida N.F. Jr."/>
            <person name="Alves L.M.C."/>
            <person name="do Amaral A.M."/>
            <person name="Bertolini M.C."/>
            <person name="Camargo L.E.A."/>
            <person name="Camarotte G."/>
            <person name="Cannavan F."/>
            <person name="Cardozo J."/>
            <person name="Chambergo F."/>
            <person name="Ciapina L.P."/>
            <person name="Cicarelli R.M.B."/>
            <person name="Coutinho L.L."/>
            <person name="Cursino-Santos J.R."/>
            <person name="El-Dorry H."/>
            <person name="Faria J.B."/>
            <person name="Ferreira A.J.S."/>
            <person name="Ferreira R.C.C."/>
            <person name="Ferro M.I.T."/>
            <person name="Formighieri E.F."/>
            <person name="Franco M.C."/>
            <person name="Greggio C.C."/>
            <person name="Gruber A."/>
            <person name="Katsuyama A.M."/>
            <person name="Kishi L.T."/>
            <person name="Leite R.P."/>
            <person name="Lemos E.G.M."/>
            <person name="Lemos M.V.F."/>
            <person name="Locali E.C."/>
            <person name="Machado M.A."/>
            <person name="Madeira A.M.B.N."/>
            <person name="Martinez-Rossi N.M."/>
            <person name="Martins E.C."/>
            <person name="Meidanis J."/>
            <person name="Menck C.F.M."/>
            <person name="Miyaki C.Y."/>
            <person name="Moon D.H."/>
            <person name="Moreira L.M."/>
            <person name="Novo M.T.M."/>
            <person name="Okura V.K."/>
            <person name="Oliveira M.C."/>
            <person name="Oliveira V.R."/>
            <person name="Pereira H.A."/>
            <person name="Rossi A."/>
            <person name="Sena J.A.D."/>
            <person name="Silva C."/>
            <person name="de Souza R.F."/>
            <person name="Spinola L.A.F."/>
            <person name="Takita M.A."/>
            <person name="Tamura R.E."/>
            <person name="Teixeira E.C."/>
            <person name="Tezza R.I.D."/>
            <person name="Trindade dos Santos M."/>
            <person name="Truffi D."/>
            <person name="Tsai S.M."/>
            <person name="White F.F."/>
            <person name="Setubal J.C."/>
            <person name="Kitajima J.P."/>
        </authorList>
    </citation>
    <scope>NUCLEOTIDE SEQUENCE [LARGE SCALE GENOMIC DNA]</scope>
    <source>
        <strain>306</strain>
    </source>
</reference>
<protein>
    <recommendedName>
        <fullName evidence="1">Fluoride-specific ion channel FluC</fullName>
    </recommendedName>
</protein>
<proteinExistence type="inferred from homology"/>
<accession>Q8PKZ5</accession>
<keyword id="KW-0997">Cell inner membrane</keyword>
<keyword id="KW-1003">Cell membrane</keyword>
<keyword id="KW-0407">Ion channel</keyword>
<keyword id="KW-0406">Ion transport</keyword>
<keyword id="KW-0472">Membrane</keyword>
<keyword id="KW-0479">Metal-binding</keyword>
<keyword id="KW-0915">Sodium</keyword>
<keyword id="KW-0812">Transmembrane</keyword>
<keyword id="KW-1133">Transmembrane helix</keyword>
<keyword id="KW-0813">Transport</keyword>
<comment type="function">
    <text evidence="1">Fluoride-specific ion channel. Important for reducing fluoride concentration in the cell, thus reducing its toxicity.</text>
</comment>
<comment type="catalytic activity">
    <reaction evidence="1">
        <text>fluoride(in) = fluoride(out)</text>
        <dbReference type="Rhea" id="RHEA:76159"/>
        <dbReference type="ChEBI" id="CHEBI:17051"/>
    </reaction>
    <physiologicalReaction direction="left-to-right" evidence="1">
        <dbReference type="Rhea" id="RHEA:76160"/>
    </physiologicalReaction>
</comment>
<comment type="activity regulation">
    <text evidence="1">Na(+) is not transported, but it plays an essential structural role and its presence is essential for fluoride channel function.</text>
</comment>
<comment type="subcellular location">
    <subcellularLocation>
        <location evidence="1">Cell inner membrane</location>
        <topology evidence="1">Multi-pass membrane protein</topology>
    </subcellularLocation>
</comment>
<comment type="similarity">
    <text evidence="1">Belongs to the fluoride channel Fluc/FEX (TC 1.A.43) family.</text>
</comment>
<evidence type="ECO:0000255" key="1">
    <source>
        <dbReference type="HAMAP-Rule" id="MF_00454"/>
    </source>
</evidence>
<organism>
    <name type="scientific">Xanthomonas axonopodis pv. citri (strain 306)</name>
    <dbReference type="NCBI Taxonomy" id="190486"/>
    <lineage>
        <taxon>Bacteria</taxon>
        <taxon>Pseudomonadati</taxon>
        <taxon>Pseudomonadota</taxon>
        <taxon>Gammaproteobacteria</taxon>
        <taxon>Lysobacterales</taxon>
        <taxon>Lysobacteraceae</taxon>
        <taxon>Xanthomonas</taxon>
    </lineage>
</organism>
<gene>
    <name evidence="1" type="primary">fluC</name>
    <name evidence="1" type="synonym">crcB</name>
    <name type="ordered locus">XAC2011</name>
</gene>
<name>FLUC_XANAC</name>
<dbReference type="EMBL" id="AE008923">
    <property type="protein sequence ID" value="AAM36873.1"/>
    <property type="molecule type" value="Genomic_DNA"/>
</dbReference>
<dbReference type="RefSeq" id="WP_011051278.1">
    <property type="nucleotide sequence ID" value="NC_003919.1"/>
</dbReference>
<dbReference type="SMR" id="Q8PKZ5"/>
<dbReference type="GeneID" id="66911147"/>
<dbReference type="KEGG" id="xac:XAC2011"/>
<dbReference type="eggNOG" id="COG0239">
    <property type="taxonomic scope" value="Bacteria"/>
</dbReference>
<dbReference type="HOGENOM" id="CLU_114342_2_3_6"/>
<dbReference type="Proteomes" id="UP000000576">
    <property type="component" value="Chromosome"/>
</dbReference>
<dbReference type="GO" id="GO:0005886">
    <property type="term" value="C:plasma membrane"/>
    <property type="evidence" value="ECO:0007669"/>
    <property type="project" value="UniProtKB-SubCell"/>
</dbReference>
<dbReference type="GO" id="GO:0062054">
    <property type="term" value="F:fluoride channel activity"/>
    <property type="evidence" value="ECO:0007669"/>
    <property type="project" value="UniProtKB-UniRule"/>
</dbReference>
<dbReference type="GO" id="GO:0046872">
    <property type="term" value="F:metal ion binding"/>
    <property type="evidence" value="ECO:0007669"/>
    <property type="project" value="UniProtKB-KW"/>
</dbReference>
<dbReference type="GO" id="GO:0140114">
    <property type="term" value="P:cellular detoxification of fluoride"/>
    <property type="evidence" value="ECO:0007669"/>
    <property type="project" value="UniProtKB-UniRule"/>
</dbReference>
<dbReference type="HAMAP" id="MF_00454">
    <property type="entry name" value="FluC"/>
    <property type="match status" value="1"/>
</dbReference>
<dbReference type="InterPro" id="IPR003691">
    <property type="entry name" value="FluC"/>
</dbReference>
<dbReference type="NCBIfam" id="NF010814">
    <property type="entry name" value="PRK14218.1"/>
    <property type="match status" value="1"/>
</dbReference>
<dbReference type="PANTHER" id="PTHR28259">
    <property type="entry name" value="FLUORIDE EXPORT PROTEIN 1-RELATED"/>
    <property type="match status" value="1"/>
</dbReference>
<dbReference type="PANTHER" id="PTHR28259:SF1">
    <property type="entry name" value="FLUORIDE EXPORT PROTEIN 1-RELATED"/>
    <property type="match status" value="1"/>
</dbReference>
<dbReference type="Pfam" id="PF02537">
    <property type="entry name" value="CRCB"/>
    <property type="match status" value="1"/>
</dbReference>
<feature type="chain" id="PRO_0000110211" description="Fluoride-specific ion channel FluC">
    <location>
        <begin position="1"/>
        <end position="133"/>
    </location>
</feature>
<feature type="transmembrane region" description="Helical" evidence="1">
    <location>
        <begin position="12"/>
        <end position="32"/>
    </location>
</feature>
<feature type="transmembrane region" description="Helical" evidence="1">
    <location>
        <begin position="41"/>
        <end position="61"/>
    </location>
</feature>
<feature type="transmembrane region" description="Helical" evidence="1">
    <location>
        <begin position="76"/>
        <end position="96"/>
    </location>
</feature>
<feature type="transmembrane region" description="Helical" evidence="1">
    <location>
        <begin position="104"/>
        <end position="124"/>
    </location>
</feature>
<feature type="binding site" evidence="1">
    <location>
        <position position="81"/>
    </location>
    <ligand>
        <name>Na(+)</name>
        <dbReference type="ChEBI" id="CHEBI:29101"/>
        <note>structural</note>
    </ligand>
</feature>
<feature type="binding site" evidence="1">
    <location>
        <position position="84"/>
    </location>
    <ligand>
        <name>Na(+)</name>
        <dbReference type="ChEBI" id="CHEBI:29101"/>
        <note>structural</note>
    </ligand>
</feature>